<name>Y3087_MYCTO</name>
<protein>
    <recommendedName>
        <fullName>Putative diacyglycerol O-acyltransferase MT3172</fullName>
        <ecNumber evidence="1">2.3.1.20</ecNumber>
    </recommendedName>
    <alternativeName>
        <fullName>Putative triacylglycerol synthase MT3172</fullName>
    </alternativeName>
</protein>
<keyword id="KW-0012">Acyltransferase</keyword>
<keyword id="KW-0319">Glycerol metabolism</keyword>
<keyword id="KW-0444">Lipid biosynthesis</keyword>
<keyword id="KW-0443">Lipid metabolism</keyword>
<keyword id="KW-1185">Reference proteome</keyword>
<keyword id="KW-0808">Transferase</keyword>
<gene>
    <name type="ordered locus">MT3172</name>
</gene>
<evidence type="ECO:0000250" key="1">
    <source>
        <dbReference type="UniProtKB" id="P9WKC9"/>
    </source>
</evidence>
<evidence type="ECO:0000255" key="2"/>
<evidence type="ECO:0000256" key="3">
    <source>
        <dbReference type="SAM" id="MobiDB-lite"/>
    </source>
</evidence>
<evidence type="ECO:0000305" key="4"/>
<dbReference type="EC" id="2.3.1.20" evidence="1"/>
<dbReference type="EMBL" id="AE000516">
    <property type="protein sequence ID" value="AAK47508.1"/>
    <property type="status" value="ALT_INIT"/>
    <property type="molecule type" value="Genomic_DNA"/>
</dbReference>
<dbReference type="PIR" id="C70853">
    <property type="entry name" value="C70853"/>
</dbReference>
<dbReference type="RefSeq" id="WP_003906978.1">
    <property type="nucleotide sequence ID" value="NZ_KK341227.1"/>
</dbReference>
<dbReference type="SMR" id="P9WKB0"/>
<dbReference type="KEGG" id="mtc:MT3172"/>
<dbReference type="PATRIC" id="fig|83331.31.peg.3418"/>
<dbReference type="HOGENOM" id="CLU_024186_4_2_11"/>
<dbReference type="UniPathway" id="UPA00282"/>
<dbReference type="Proteomes" id="UP000001020">
    <property type="component" value="Chromosome"/>
</dbReference>
<dbReference type="GO" id="GO:0005886">
    <property type="term" value="C:plasma membrane"/>
    <property type="evidence" value="ECO:0007669"/>
    <property type="project" value="TreeGrafter"/>
</dbReference>
<dbReference type="GO" id="GO:0004144">
    <property type="term" value="F:diacylglycerol O-acyltransferase activity"/>
    <property type="evidence" value="ECO:0007669"/>
    <property type="project" value="UniProtKB-EC"/>
</dbReference>
<dbReference type="GO" id="GO:0051701">
    <property type="term" value="P:biological process involved in interaction with host"/>
    <property type="evidence" value="ECO:0007669"/>
    <property type="project" value="TreeGrafter"/>
</dbReference>
<dbReference type="GO" id="GO:0006071">
    <property type="term" value="P:glycerol metabolic process"/>
    <property type="evidence" value="ECO:0007669"/>
    <property type="project" value="UniProtKB-KW"/>
</dbReference>
<dbReference type="GO" id="GO:0001666">
    <property type="term" value="P:response to hypoxia"/>
    <property type="evidence" value="ECO:0007669"/>
    <property type="project" value="TreeGrafter"/>
</dbReference>
<dbReference type="GO" id="GO:0071731">
    <property type="term" value="P:response to nitric oxide"/>
    <property type="evidence" value="ECO:0007669"/>
    <property type="project" value="TreeGrafter"/>
</dbReference>
<dbReference type="GO" id="GO:0019432">
    <property type="term" value="P:triglyceride biosynthetic process"/>
    <property type="evidence" value="ECO:0007669"/>
    <property type="project" value="UniProtKB-UniPathway"/>
</dbReference>
<dbReference type="Gene3D" id="3.30.559.10">
    <property type="entry name" value="Chloramphenicol acetyltransferase-like domain"/>
    <property type="match status" value="1"/>
</dbReference>
<dbReference type="InterPro" id="IPR014292">
    <property type="entry name" value="Acyl_transf_WS/DGAT"/>
</dbReference>
<dbReference type="InterPro" id="IPR023213">
    <property type="entry name" value="CAT-like_dom_sf"/>
</dbReference>
<dbReference type="InterPro" id="IPR045034">
    <property type="entry name" value="O-acyltransferase_WSD1-like"/>
</dbReference>
<dbReference type="InterPro" id="IPR009721">
    <property type="entry name" value="O-acyltransferase_WSD1_C"/>
</dbReference>
<dbReference type="InterPro" id="IPR004255">
    <property type="entry name" value="O-acyltransferase_WSD1_N"/>
</dbReference>
<dbReference type="NCBIfam" id="TIGR02946">
    <property type="entry name" value="acyl_WS_DGAT"/>
    <property type="match status" value="1"/>
</dbReference>
<dbReference type="PANTHER" id="PTHR31650">
    <property type="entry name" value="O-ACYLTRANSFERASE (WSD1-LIKE) FAMILY PROTEIN"/>
    <property type="match status" value="1"/>
</dbReference>
<dbReference type="PANTHER" id="PTHR31650:SF1">
    <property type="entry name" value="WAX ESTER SYNTHASE_DIACYLGLYCEROL ACYLTRANSFERASE 4-RELATED"/>
    <property type="match status" value="1"/>
</dbReference>
<dbReference type="Pfam" id="PF06974">
    <property type="entry name" value="WS_DGAT_C"/>
    <property type="match status" value="1"/>
</dbReference>
<dbReference type="Pfam" id="PF03007">
    <property type="entry name" value="WS_DGAT_cat"/>
    <property type="match status" value="1"/>
</dbReference>
<dbReference type="SUPFAM" id="SSF52777">
    <property type="entry name" value="CoA-dependent acyltransferases"/>
    <property type="match status" value="1"/>
</dbReference>
<proteinExistence type="inferred from homology"/>
<sequence>MRRLNGVDALMLYLDGGSAYNHTLKISVLDPSTDPDGWSWPKARQMFEERAHLLPVFRLRYLPTPLGLHHPIWVEDPEFDLDAHVRRVVCPAPGGMAEFCALVEQIYAHPLDRDRPLWQTWVVEGLDGGRVALVTLLHHAYSDGVGVLDMLAAFYNDTPDEAPVVAPPWEPPPLPSTRQRLGWALRDLPSRLGKIAPTVRAVRDRVRIEREFAKDGDRRVPPTFDRSAPPGPFQRGLSRSRRFSCESFPLAEVREVSKTLGVTINDVFLACVAGAVRRYLERCGSPPTDAMVATMPLAVTPAAERAHPGNYSSVDYVWLRADIADPLERLHATHLAAEATKQHFAQTKDADVGAVVELLPERLISGLARANARTKGRFDTFKNVVVSNVPGPREPRYLGRWRVDQWFSTGQISHGATLNMTVWSYCDQFNLCVMADAVAVRNTWELLGGFRASHEELLAAARAQATPKEMAT</sequence>
<feature type="chain" id="PRO_0000427685" description="Putative diacyglycerol O-acyltransferase MT3172">
    <location>
        <begin position="1"/>
        <end position="472"/>
    </location>
</feature>
<feature type="region of interest" description="Disordered" evidence="3">
    <location>
        <begin position="217"/>
        <end position="238"/>
    </location>
</feature>
<feature type="active site" description="Proton acceptor" evidence="2">
    <location>
        <position position="139"/>
    </location>
</feature>
<organism>
    <name type="scientific">Mycobacterium tuberculosis (strain CDC 1551 / Oshkosh)</name>
    <dbReference type="NCBI Taxonomy" id="83331"/>
    <lineage>
        <taxon>Bacteria</taxon>
        <taxon>Bacillati</taxon>
        <taxon>Actinomycetota</taxon>
        <taxon>Actinomycetes</taxon>
        <taxon>Mycobacteriales</taxon>
        <taxon>Mycobacteriaceae</taxon>
        <taxon>Mycobacterium</taxon>
        <taxon>Mycobacterium tuberculosis complex</taxon>
    </lineage>
</organism>
<comment type="catalytic activity">
    <reaction evidence="1">
        <text>an acyl-CoA + a 1,2-diacyl-sn-glycerol = a triacyl-sn-glycerol + CoA</text>
        <dbReference type="Rhea" id="RHEA:10868"/>
        <dbReference type="ChEBI" id="CHEBI:17815"/>
        <dbReference type="ChEBI" id="CHEBI:57287"/>
        <dbReference type="ChEBI" id="CHEBI:58342"/>
        <dbReference type="ChEBI" id="CHEBI:64615"/>
        <dbReference type="EC" id="2.3.1.20"/>
    </reaction>
</comment>
<comment type="pathway">
    <text>Glycerolipid metabolism; triacylglycerol biosynthesis.</text>
</comment>
<comment type="similarity">
    <text evidence="4">Belongs to the long-chain O-acyltransferase family.</text>
</comment>
<comment type="sequence caution" evidence="4">
    <conflict type="erroneous initiation">
        <sequence resource="EMBL-CDS" id="AAK47508"/>
    </conflict>
    <text>Extended N-terminus.</text>
</comment>
<accession>P9WKB0</accession>
<accession>L0TBI7</accession>
<accession>O53304</accession>
<reference key="1">
    <citation type="journal article" date="2002" name="J. Bacteriol.">
        <title>Whole-genome comparison of Mycobacterium tuberculosis clinical and laboratory strains.</title>
        <authorList>
            <person name="Fleischmann R.D."/>
            <person name="Alland D."/>
            <person name="Eisen J.A."/>
            <person name="Carpenter L."/>
            <person name="White O."/>
            <person name="Peterson J.D."/>
            <person name="DeBoy R.T."/>
            <person name="Dodson R.J."/>
            <person name="Gwinn M.L."/>
            <person name="Haft D.H."/>
            <person name="Hickey E.K."/>
            <person name="Kolonay J.F."/>
            <person name="Nelson W.C."/>
            <person name="Umayam L.A."/>
            <person name="Ermolaeva M.D."/>
            <person name="Salzberg S.L."/>
            <person name="Delcher A."/>
            <person name="Utterback T.R."/>
            <person name="Weidman J.F."/>
            <person name="Khouri H.M."/>
            <person name="Gill J."/>
            <person name="Mikula A."/>
            <person name="Bishai W."/>
            <person name="Jacobs W.R. Jr."/>
            <person name="Venter J.C."/>
            <person name="Fraser C.M."/>
        </authorList>
    </citation>
    <scope>NUCLEOTIDE SEQUENCE [LARGE SCALE GENOMIC DNA]</scope>
    <source>
        <strain>CDC 1551 / Oshkosh</strain>
    </source>
</reference>